<keyword id="KW-0963">Cytoplasm</keyword>
<keyword id="KW-1185">Reference proteome</keyword>
<keyword id="KW-0808">Transferase</keyword>
<evidence type="ECO:0000255" key="1">
    <source>
        <dbReference type="HAMAP-Rule" id="MF_01009"/>
    </source>
</evidence>
<protein>
    <recommendedName>
        <fullName evidence="1">Thiosulfate sulfurtransferase GlpE</fullName>
        <ecNumber evidence="1">2.8.1.1</ecNumber>
    </recommendedName>
</protein>
<reference key="1">
    <citation type="journal article" date="1995" name="Science">
        <title>Whole-genome random sequencing and assembly of Haemophilus influenzae Rd.</title>
        <authorList>
            <person name="Fleischmann R.D."/>
            <person name="Adams M.D."/>
            <person name="White O."/>
            <person name="Clayton R.A."/>
            <person name="Kirkness E.F."/>
            <person name="Kerlavage A.R."/>
            <person name="Bult C.J."/>
            <person name="Tomb J.-F."/>
            <person name="Dougherty B.A."/>
            <person name="Merrick J.M."/>
            <person name="McKenney K."/>
            <person name="Sutton G.G."/>
            <person name="FitzHugh W."/>
            <person name="Fields C.A."/>
            <person name="Gocayne J.D."/>
            <person name="Scott J.D."/>
            <person name="Shirley R."/>
            <person name="Liu L.-I."/>
            <person name="Glodek A."/>
            <person name="Kelley J.M."/>
            <person name="Weidman J.F."/>
            <person name="Phillips C.A."/>
            <person name="Spriggs T."/>
            <person name="Hedblom E."/>
            <person name="Cotton M.D."/>
            <person name="Utterback T.R."/>
            <person name="Hanna M.C."/>
            <person name="Nguyen D.T."/>
            <person name="Saudek D.M."/>
            <person name="Brandon R.C."/>
            <person name="Fine L.D."/>
            <person name="Fritchman J.L."/>
            <person name="Fuhrmann J.L."/>
            <person name="Geoghagen N.S.M."/>
            <person name="Gnehm C.L."/>
            <person name="McDonald L.A."/>
            <person name="Small K.V."/>
            <person name="Fraser C.M."/>
            <person name="Smith H.O."/>
            <person name="Venter J.C."/>
        </authorList>
    </citation>
    <scope>NUCLEOTIDE SEQUENCE [LARGE SCALE GENOMIC DNA]</scope>
    <source>
        <strain>ATCC 51907 / DSM 11121 / KW20 / Rd</strain>
    </source>
</reference>
<accession>P44819</accession>
<dbReference type="EC" id="2.8.1.1" evidence="1"/>
<dbReference type="EMBL" id="L42023">
    <property type="protein sequence ID" value="AAC22338.1"/>
    <property type="molecule type" value="Genomic_DNA"/>
</dbReference>
<dbReference type="PIR" id="H64085">
    <property type="entry name" value="H64085"/>
</dbReference>
<dbReference type="RefSeq" id="NP_438839.1">
    <property type="nucleotide sequence ID" value="NC_000907.1"/>
</dbReference>
<dbReference type="SMR" id="P44819"/>
<dbReference type="STRING" id="71421.HI_0679"/>
<dbReference type="EnsemblBacteria" id="AAC22338">
    <property type="protein sequence ID" value="AAC22338"/>
    <property type="gene ID" value="HI_0679"/>
</dbReference>
<dbReference type="KEGG" id="hin:HI_0679"/>
<dbReference type="PATRIC" id="fig|71421.8.peg.710"/>
<dbReference type="eggNOG" id="COG0607">
    <property type="taxonomic scope" value="Bacteria"/>
</dbReference>
<dbReference type="HOGENOM" id="CLU_089574_14_0_6"/>
<dbReference type="OrthoDB" id="9811849at2"/>
<dbReference type="PhylomeDB" id="P44819"/>
<dbReference type="BioCyc" id="HINF71421:G1GJ1-714-MONOMER"/>
<dbReference type="Proteomes" id="UP000000579">
    <property type="component" value="Chromosome"/>
</dbReference>
<dbReference type="GO" id="GO:0005737">
    <property type="term" value="C:cytoplasm"/>
    <property type="evidence" value="ECO:0007669"/>
    <property type="project" value="UniProtKB-SubCell"/>
</dbReference>
<dbReference type="GO" id="GO:0004792">
    <property type="term" value="F:thiosulfate-cyanide sulfurtransferase activity"/>
    <property type="evidence" value="ECO:0007669"/>
    <property type="project" value="UniProtKB-UniRule"/>
</dbReference>
<dbReference type="GO" id="GO:0006071">
    <property type="term" value="P:glycerol metabolic process"/>
    <property type="evidence" value="ECO:0007669"/>
    <property type="project" value="UniProtKB-UniRule"/>
</dbReference>
<dbReference type="CDD" id="cd01444">
    <property type="entry name" value="GlpE_ST"/>
    <property type="match status" value="1"/>
</dbReference>
<dbReference type="Gene3D" id="3.40.250.10">
    <property type="entry name" value="Rhodanese-like domain"/>
    <property type="match status" value="1"/>
</dbReference>
<dbReference type="HAMAP" id="MF_01009">
    <property type="entry name" value="Thiosulf_sulfurtr"/>
    <property type="match status" value="1"/>
</dbReference>
<dbReference type="InterPro" id="IPR050229">
    <property type="entry name" value="GlpE_sulfurtransferase"/>
</dbReference>
<dbReference type="InterPro" id="IPR001763">
    <property type="entry name" value="Rhodanese-like_dom"/>
</dbReference>
<dbReference type="InterPro" id="IPR036873">
    <property type="entry name" value="Rhodanese-like_dom_sf"/>
</dbReference>
<dbReference type="InterPro" id="IPR023695">
    <property type="entry name" value="Thiosulf_sulfurTrfase"/>
</dbReference>
<dbReference type="NCBIfam" id="NF001195">
    <property type="entry name" value="PRK00162.1"/>
    <property type="match status" value="1"/>
</dbReference>
<dbReference type="PANTHER" id="PTHR43031">
    <property type="entry name" value="FAD-DEPENDENT OXIDOREDUCTASE"/>
    <property type="match status" value="1"/>
</dbReference>
<dbReference type="PANTHER" id="PTHR43031:SF6">
    <property type="entry name" value="THIOSULFATE SULFURTRANSFERASE GLPE"/>
    <property type="match status" value="1"/>
</dbReference>
<dbReference type="Pfam" id="PF00581">
    <property type="entry name" value="Rhodanese"/>
    <property type="match status" value="1"/>
</dbReference>
<dbReference type="SMART" id="SM00450">
    <property type="entry name" value="RHOD"/>
    <property type="match status" value="1"/>
</dbReference>
<dbReference type="SUPFAM" id="SSF52821">
    <property type="entry name" value="Rhodanese/Cell cycle control phosphatase"/>
    <property type="match status" value="1"/>
</dbReference>
<dbReference type="PROSITE" id="PS50206">
    <property type="entry name" value="RHODANESE_3"/>
    <property type="match status" value="1"/>
</dbReference>
<gene>
    <name evidence="1" type="primary">glpE</name>
    <name type="ordered locus">HI_0679</name>
</gene>
<sequence>MPFKEITPQQAWEMMQQGAILVDIRDNMRFAYSHPKGAFHLTNQSFLQFEELADFDSPIIVSCYHGVSSRNVATFLVEQGYKNVFSMIGGFDGWCRAELPIDTTY</sequence>
<proteinExistence type="inferred from homology"/>
<comment type="function">
    <text evidence="1">Transferase that catalyzes the transfer of sulfur from thiosulfate to thiophilic acceptors such as cyanide or dithiols. May function in a CysM-independent thiosulfate assimilation pathway by catalyzing the conversion of thiosulfate to sulfite, which can then be used for L-cysteine biosynthesis.</text>
</comment>
<comment type="catalytic activity">
    <reaction evidence="1">
        <text>thiosulfate + hydrogen cyanide = thiocyanate + sulfite + 2 H(+)</text>
        <dbReference type="Rhea" id="RHEA:16881"/>
        <dbReference type="ChEBI" id="CHEBI:15378"/>
        <dbReference type="ChEBI" id="CHEBI:17359"/>
        <dbReference type="ChEBI" id="CHEBI:18022"/>
        <dbReference type="ChEBI" id="CHEBI:18407"/>
        <dbReference type="ChEBI" id="CHEBI:33542"/>
        <dbReference type="EC" id="2.8.1.1"/>
    </reaction>
</comment>
<comment type="catalytic activity">
    <reaction evidence="1">
        <text>thiosulfate + [thioredoxin]-dithiol = [thioredoxin]-disulfide + hydrogen sulfide + sulfite + 2 H(+)</text>
        <dbReference type="Rhea" id="RHEA:83859"/>
        <dbReference type="Rhea" id="RHEA-COMP:10698"/>
        <dbReference type="Rhea" id="RHEA-COMP:10700"/>
        <dbReference type="ChEBI" id="CHEBI:15378"/>
        <dbReference type="ChEBI" id="CHEBI:17359"/>
        <dbReference type="ChEBI" id="CHEBI:29919"/>
        <dbReference type="ChEBI" id="CHEBI:29950"/>
        <dbReference type="ChEBI" id="CHEBI:33542"/>
        <dbReference type="ChEBI" id="CHEBI:50058"/>
    </reaction>
</comment>
<comment type="subcellular location">
    <subcellularLocation>
        <location evidence="1">Cytoplasm</location>
    </subcellularLocation>
</comment>
<comment type="similarity">
    <text evidence="1">Belongs to the GlpE family.</text>
</comment>
<feature type="chain" id="PRO_0000200553" description="Thiosulfate sulfurtransferase GlpE">
    <location>
        <begin position="1"/>
        <end position="105"/>
    </location>
</feature>
<feature type="domain" description="Rhodanese" evidence="1">
    <location>
        <begin position="15"/>
        <end position="103"/>
    </location>
</feature>
<feature type="active site" description="Cysteine persulfide intermediate" evidence="1">
    <location>
        <position position="63"/>
    </location>
</feature>
<name>GLPE_HAEIN</name>
<organism>
    <name type="scientific">Haemophilus influenzae (strain ATCC 51907 / DSM 11121 / KW20 / Rd)</name>
    <dbReference type="NCBI Taxonomy" id="71421"/>
    <lineage>
        <taxon>Bacteria</taxon>
        <taxon>Pseudomonadati</taxon>
        <taxon>Pseudomonadota</taxon>
        <taxon>Gammaproteobacteria</taxon>
        <taxon>Pasteurellales</taxon>
        <taxon>Pasteurellaceae</taxon>
        <taxon>Haemophilus</taxon>
    </lineage>
</organism>